<organism>
    <name type="scientific">White clover cryptic virus 1 (isolate Boccardo/2004)</name>
    <name type="common">WCCV-1</name>
    <dbReference type="NCBI Taxonomy" id="654934"/>
    <lineage>
        <taxon>Viruses</taxon>
        <taxon>Riboviria</taxon>
        <taxon>Orthornavirae</taxon>
        <taxon>Pisuviricota</taxon>
        <taxon>Duplopiviricetes</taxon>
        <taxon>Durnavirales</taxon>
        <taxon>Partitiviridae</taxon>
        <taxon>Alphapartitivirus</taxon>
        <taxon>White clover cryptic virus 1</taxon>
    </lineage>
</organism>
<organismHost>
    <name type="scientific">Trifolium repens</name>
    <name type="common">Creeping white clover</name>
    <dbReference type="NCBI Taxonomy" id="3899"/>
</organismHost>
<reference key="1">
    <citation type="journal article" date="2005" name="Arch. Virol.">
        <title>Complete sequence of the RNA1 of an isolate of White clover cryptic virus 1, type species of the genus Alphacryptovirus.</title>
        <authorList>
            <person name="Boccardo G."/>
            <person name="Candresse T."/>
        </authorList>
    </citation>
    <scope>NUCLEOTIDE SEQUENCE [GENOMIC RNA]</scope>
</reference>
<accession>Q64FP0</accession>
<dbReference type="EC" id="2.7.7.48"/>
<dbReference type="EMBL" id="AY705784">
    <property type="protein sequence ID" value="AAU14888.1"/>
    <property type="molecule type" value="Genomic_RNA"/>
</dbReference>
<dbReference type="RefSeq" id="YP_086754.1">
    <property type="nucleotide sequence ID" value="NC_006275.1"/>
</dbReference>
<dbReference type="GeneID" id="5076437"/>
<dbReference type="KEGG" id="vg:5076437"/>
<dbReference type="Proteomes" id="UP000001672">
    <property type="component" value="Genome"/>
</dbReference>
<dbReference type="GO" id="GO:0000166">
    <property type="term" value="F:nucleotide binding"/>
    <property type="evidence" value="ECO:0007669"/>
    <property type="project" value="UniProtKB-KW"/>
</dbReference>
<dbReference type="GO" id="GO:0003723">
    <property type="term" value="F:RNA binding"/>
    <property type="evidence" value="ECO:0007669"/>
    <property type="project" value="InterPro"/>
</dbReference>
<dbReference type="GO" id="GO:0003968">
    <property type="term" value="F:RNA-directed RNA polymerase activity"/>
    <property type="evidence" value="ECO:0007669"/>
    <property type="project" value="UniProtKB-KW"/>
</dbReference>
<dbReference type="GO" id="GO:0006351">
    <property type="term" value="P:DNA-templated transcription"/>
    <property type="evidence" value="ECO:0007669"/>
    <property type="project" value="InterPro"/>
</dbReference>
<dbReference type="InterPro" id="IPR043502">
    <property type="entry name" value="DNA/RNA_pol_sf"/>
</dbReference>
<dbReference type="InterPro" id="IPR001205">
    <property type="entry name" value="RNA-dir_pol_C"/>
</dbReference>
<dbReference type="Pfam" id="PF00680">
    <property type="entry name" value="RdRP_1"/>
    <property type="match status" value="1"/>
</dbReference>
<dbReference type="SUPFAM" id="SSF56672">
    <property type="entry name" value="DNA/RNA polymerases"/>
    <property type="match status" value="1"/>
</dbReference>
<comment type="function">
    <text evidence="1">RNA-dependent RNA polymerase which replicates the viral genome.</text>
</comment>
<comment type="catalytic activity">
    <reaction>
        <text>RNA(n) + a ribonucleoside 5'-triphosphate = RNA(n+1) + diphosphate</text>
        <dbReference type="Rhea" id="RHEA:21248"/>
        <dbReference type="Rhea" id="RHEA-COMP:14527"/>
        <dbReference type="Rhea" id="RHEA-COMP:17342"/>
        <dbReference type="ChEBI" id="CHEBI:33019"/>
        <dbReference type="ChEBI" id="CHEBI:61557"/>
        <dbReference type="ChEBI" id="CHEBI:140395"/>
        <dbReference type="EC" id="2.7.7.48"/>
    </reaction>
</comment>
<sequence length="616" mass="72865">MDYLITAFNRITHWFLTPTNLEYIGSYSLPPGLLRVNDVAVANHKATLDRSFDKYLYEHEINLITKEYRRSPIDEDSILEDFFSGDLPYFEIPFDEHVERGLECMAAAFRPPRPCRPAHILDVKHGYPYKWNVNAEPPFSTDEYFLSQRKTFGEFIRMHEYEHIDKEDFFRRHPNIESHDFLRTVVPPKFGFLKSMIFSWTRRWHHIIKSGFQDSTDLEQTGYFFNRFIFPMLLHTKTAIVKKNDPNKMRTIWGASKPWIIAETMFYWEYLAWIKHNPGATPMLWGYETFTGGWFRLNHELFCGLIQRSFLTLDWSRFDKRAYFPLLRRILYTVKTFLTFEEGYVPTHAAPTHPQWSQENIDRLERLWLWTLENLFEAPIILPDGRMYRRHFAGIPSGLFITQLLDSWYNYTMLATILSALHFDPLHCIIKVQGDDSILRLTTLIPVDQHTNFMDHIVRLADTYFNSIVNVKKSEVRNSLNGCEVLSYRNHNGLPHRDEITMLAQFYHTKARDPTPEITMAQAIGFAYASCANHNRVLWVLEDVYNYYRDLGYRPNRAGLTLTFGDSPDLTMPEMPLDHFPTKSEIRRYHTETHYQNEAQNARTWPRTLFINAPGE</sequence>
<name>RDRP_WCCVB</name>
<evidence type="ECO:0000305" key="1"/>
<feature type="chain" id="PRO_0000402794" description="RNA-directed RNA polymerase">
    <location>
        <begin position="1"/>
        <end position="616"/>
    </location>
</feature>
<proteinExistence type="predicted"/>
<keyword id="KW-0547">Nucleotide-binding</keyword>
<keyword id="KW-0548">Nucleotidyltransferase</keyword>
<keyword id="KW-1185">Reference proteome</keyword>
<keyword id="KW-0696">RNA-directed RNA polymerase</keyword>
<keyword id="KW-0808">Transferase</keyword>
<keyword id="KW-0693">Viral RNA replication</keyword>
<protein>
    <recommendedName>
        <fullName>RNA-directed RNA polymerase</fullName>
        <ecNumber>2.7.7.48</ecNumber>
    </recommendedName>
</protein>